<gene>
    <name type="primary">Sec23ip</name>
</gene>
<organism>
    <name type="scientific">Mus musculus</name>
    <name type="common">Mouse</name>
    <dbReference type="NCBI Taxonomy" id="10090"/>
    <lineage>
        <taxon>Eukaryota</taxon>
        <taxon>Metazoa</taxon>
        <taxon>Chordata</taxon>
        <taxon>Craniata</taxon>
        <taxon>Vertebrata</taxon>
        <taxon>Euteleostomi</taxon>
        <taxon>Mammalia</taxon>
        <taxon>Eutheria</taxon>
        <taxon>Euarchontoglires</taxon>
        <taxon>Glires</taxon>
        <taxon>Rodentia</taxon>
        <taxon>Myomorpha</taxon>
        <taxon>Muroidea</taxon>
        <taxon>Muridae</taxon>
        <taxon>Murinae</taxon>
        <taxon>Mus</taxon>
        <taxon>Mus</taxon>
    </lineage>
</organism>
<accession>Q6NZC7</accession>
<accession>Q8BXY6</accession>
<name>S23IP_MOUSE</name>
<feature type="chain" id="PRO_0000097555" description="SEC23-interacting protein">
    <location>
        <begin position="1"/>
        <end position="998"/>
    </location>
</feature>
<feature type="domain" description="SAM">
    <location>
        <begin position="640"/>
        <end position="703"/>
    </location>
</feature>
<feature type="domain" description="DDHD" evidence="3">
    <location>
        <begin position="777"/>
        <end position="987"/>
    </location>
</feature>
<feature type="region of interest" description="Interaction with SEC23A" evidence="1">
    <location>
        <begin position="1"/>
        <end position="363"/>
    </location>
</feature>
<feature type="region of interest" description="Disordered" evidence="4">
    <location>
        <begin position="50"/>
        <end position="246"/>
    </location>
</feature>
<feature type="region of interest" description="Disordered" evidence="4">
    <location>
        <begin position="720"/>
        <end position="742"/>
    </location>
</feature>
<feature type="compositionally biased region" description="Acidic residues" evidence="4">
    <location>
        <begin position="54"/>
        <end position="63"/>
    </location>
</feature>
<feature type="compositionally biased region" description="Polar residues" evidence="4">
    <location>
        <begin position="65"/>
        <end position="78"/>
    </location>
</feature>
<feature type="compositionally biased region" description="Low complexity" evidence="4">
    <location>
        <begin position="79"/>
        <end position="88"/>
    </location>
</feature>
<feature type="compositionally biased region" description="Polar residues" evidence="4">
    <location>
        <begin position="94"/>
        <end position="108"/>
    </location>
</feature>
<feature type="compositionally biased region" description="Polar residues" evidence="4">
    <location>
        <begin position="143"/>
        <end position="158"/>
    </location>
</feature>
<feature type="compositionally biased region" description="Polar residues" evidence="4">
    <location>
        <begin position="232"/>
        <end position="241"/>
    </location>
</feature>
<feature type="compositionally biased region" description="Basic and acidic residues" evidence="4">
    <location>
        <begin position="722"/>
        <end position="732"/>
    </location>
</feature>
<feature type="modified residue" description="Phosphoserine" evidence="6">
    <location>
        <position position="600"/>
    </location>
</feature>
<feature type="modified residue" description="Phosphoserine" evidence="6">
    <location>
        <position position="735"/>
    </location>
</feature>
<feature type="modified residue" description="Phosphoserine" evidence="6">
    <location>
        <position position="748"/>
    </location>
</feature>
<feature type="modified residue" description="Phosphoserine" evidence="2">
    <location>
        <position position="924"/>
    </location>
</feature>
<reference key="1">
    <citation type="journal article" date="2005" name="Science">
        <title>The transcriptional landscape of the mammalian genome.</title>
        <authorList>
            <person name="Carninci P."/>
            <person name="Kasukawa T."/>
            <person name="Katayama S."/>
            <person name="Gough J."/>
            <person name="Frith M.C."/>
            <person name="Maeda N."/>
            <person name="Oyama R."/>
            <person name="Ravasi T."/>
            <person name="Lenhard B."/>
            <person name="Wells C."/>
            <person name="Kodzius R."/>
            <person name="Shimokawa K."/>
            <person name="Bajic V.B."/>
            <person name="Brenner S.E."/>
            <person name="Batalov S."/>
            <person name="Forrest A.R."/>
            <person name="Zavolan M."/>
            <person name="Davis M.J."/>
            <person name="Wilming L.G."/>
            <person name="Aidinis V."/>
            <person name="Allen J.E."/>
            <person name="Ambesi-Impiombato A."/>
            <person name="Apweiler R."/>
            <person name="Aturaliya R.N."/>
            <person name="Bailey T.L."/>
            <person name="Bansal M."/>
            <person name="Baxter L."/>
            <person name="Beisel K.W."/>
            <person name="Bersano T."/>
            <person name="Bono H."/>
            <person name="Chalk A.M."/>
            <person name="Chiu K.P."/>
            <person name="Choudhary V."/>
            <person name="Christoffels A."/>
            <person name="Clutterbuck D.R."/>
            <person name="Crowe M.L."/>
            <person name="Dalla E."/>
            <person name="Dalrymple B.P."/>
            <person name="de Bono B."/>
            <person name="Della Gatta G."/>
            <person name="di Bernardo D."/>
            <person name="Down T."/>
            <person name="Engstrom P."/>
            <person name="Fagiolini M."/>
            <person name="Faulkner G."/>
            <person name="Fletcher C.F."/>
            <person name="Fukushima T."/>
            <person name="Furuno M."/>
            <person name="Futaki S."/>
            <person name="Gariboldi M."/>
            <person name="Georgii-Hemming P."/>
            <person name="Gingeras T.R."/>
            <person name="Gojobori T."/>
            <person name="Green R.E."/>
            <person name="Gustincich S."/>
            <person name="Harbers M."/>
            <person name="Hayashi Y."/>
            <person name="Hensch T.K."/>
            <person name="Hirokawa N."/>
            <person name="Hill D."/>
            <person name="Huminiecki L."/>
            <person name="Iacono M."/>
            <person name="Ikeo K."/>
            <person name="Iwama A."/>
            <person name="Ishikawa T."/>
            <person name="Jakt M."/>
            <person name="Kanapin A."/>
            <person name="Katoh M."/>
            <person name="Kawasawa Y."/>
            <person name="Kelso J."/>
            <person name="Kitamura H."/>
            <person name="Kitano H."/>
            <person name="Kollias G."/>
            <person name="Krishnan S.P."/>
            <person name="Kruger A."/>
            <person name="Kummerfeld S.K."/>
            <person name="Kurochkin I.V."/>
            <person name="Lareau L.F."/>
            <person name="Lazarevic D."/>
            <person name="Lipovich L."/>
            <person name="Liu J."/>
            <person name="Liuni S."/>
            <person name="McWilliam S."/>
            <person name="Madan Babu M."/>
            <person name="Madera M."/>
            <person name="Marchionni L."/>
            <person name="Matsuda H."/>
            <person name="Matsuzawa S."/>
            <person name="Miki H."/>
            <person name="Mignone F."/>
            <person name="Miyake S."/>
            <person name="Morris K."/>
            <person name="Mottagui-Tabar S."/>
            <person name="Mulder N."/>
            <person name="Nakano N."/>
            <person name="Nakauchi H."/>
            <person name="Ng P."/>
            <person name="Nilsson R."/>
            <person name="Nishiguchi S."/>
            <person name="Nishikawa S."/>
            <person name="Nori F."/>
            <person name="Ohara O."/>
            <person name="Okazaki Y."/>
            <person name="Orlando V."/>
            <person name="Pang K.C."/>
            <person name="Pavan W.J."/>
            <person name="Pavesi G."/>
            <person name="Pesole G."/>
            <person name="Petrovsky N."/>
            <person name="Piazza S."/>
            <person name="Reed J."/>
            <person name="Reid J.F."/>
            <person name="Ring B.Z."/>
            <person name="Ringwald M."/>
            <person name="Rost B."/>
            <person name="Ruan Y."/>
            <person name="Salzberg S.L."/>
            <person name="Sandelin A."/>
            <person name="Schneider C."/>
            <person name="Schoenbach C."/>
            <person name="Sekiguchi K."/>
            <person name="Semple C.A."/>
            <person name="Seno S."/>
            <person name="Sessa L."/>
            <person name="Sheng Y."/>
            <person name="Shibata Y."/>
            <person name="Shimada H."/>
            <person name="Shimada K."/>
            <person name="Silva D."/>
            <person name="Sinclair B."/>
            <person name="Sperling S."/>
            <person name="Stupka E."/>
            <person name="Sugiura K."/>
            <person name="Sultana R."/>
            <person name="Takenaka Y."/>
            <person name="Taki K."/>
            <person name="Tammoja K."/>
            <person name="Tan S.L."/>
            <person name="Tang S."/>
            <person name="Taylor M.S."/>
            <person name="Tegner J."/>
            <person name="Teichmann S.A."/>
            <person name="Ueda H.R."/>
            <person name="van Nimwegen E."/>
            <person name="Verardo R."/>
            <person name="Wei C.L."/>
            <person name="Yagi K."/>
            <person name="Yamanishi H."/>
            <person name="Zabarovsky E."/>
            <person name="Zhu S."/>
            <person name="Zimmer A."/>
            <person name="Hide W."/>
            <person name="Bult C."/>
            <person name="Grimmond S.M."/>
            <person name="Teasdale R.D."/>
            <person name="Liu E.T."/>
            <person name="Brusic V."/>
            <person name="Quackenbush J."/>
            <person name="Wahlestedt C."/>
            <person name="Mattick J.S."/>
            <person name="Hume D.A."/>
            <person name="Kai C."/>
            <person name="Sasaki D."/>
            <person name="Tomaru Y."/>
            <person name="Fukuda S."/>
            <person name="Kanamori-Katayama M."/>
            <person name="Suzuki M."/>
            <person name="Aoki J."/>
            <person name="Arakawa T."/>
            <person name="Iida J."/>
            <person name="Imamura K."/>
            <person name="Itoh M."/>
            <person name="Kato T."/>
            <person name="Kawaji H."/>
            <person name="Kawagashira N."/>
            <person name="Kawashima T."/>
            <person name="Kojima M."/>
            <person name="Kondo S."/>
            <person name="Konno H."/>
            <person name="Nakano K."/>
            <person name="Ninomiya N."/>
            <person name="Nishio T."/>
            <person name="Okada M."/>
            <person name="Plessy C."/>
            <person name="Shibata K."/>
            <person name="Shiraki T."/>
            <person name="Suzuki S."/>
            <person name="Tagami M."/>
            <person name="Waki K."/>
            <person name="Watahiki A."/>
            <person name="Okamura-Oho Y."/>
            <person name="Suzuki H."/>
            <person name="Kawai J."/>
            <person name="Hayashizaki Y."/>
        </authorList>
    </citation>
    <scope>NUCLEOTIDE SEQUENCE [LARGE SCALE MRNA] OF 1-73 AND 833-998</scope>
    <source>
        <strain>C57BL/6J</strain>
        <tissue>Cerebellum</tissue>
    </source>
</reference>
<reference key="2">
    <citation type="journal article" date="2004" name="Genome Res.">
        <title>The status, quality, and expansion of the NIH full-length cDNA project: the Mammalian Gene Collection (MGC).</title>
        <authorList>
            <consortium name="The MGC Project Team"/>
        </authorList>
    </citation>
    <scope>NUCLEOTIDE SEQUENCE [LARGE SCALE MRNA] OF 74-918</scope>
    <source>
        <strain>C57BL/6NCr</strain>
        <tissue>Hematopoietic stem cell</tissue>
    </source>
</reference>
<reference key="3">
    <citation type="journal article" date="2010" name="Cell">
        <title>A tissue-specific atlas of mouse protein phosphorylation and expression.</title>
        <authorList>
            <person name="Huttlin E.L."/>
            <person name="Jedrychowski M.P."/>
            <person name="Elias J.E."/>
            <person name="Goswami T."/>
            <person name="Rad R."/>
            <person name="Beausoleil S.A."/>
            <person name="Villen J."/>
            <person name="Haas W."/>
            <person name="Sowa M.E."/>
            <person name="Gygi S.P."/>
        </authorList>
    </citation>
    <scope>PHOSPHORYLATION [LARGE SCALE ANALYSIS] AT SER-600; SER-735 AND SER-748</scope>
    <scope>IDENTIFICATION BY MASS SPECTROMETRY [LARGE SCALE ANALYSIS]</scope>
    <source>
        <tissue>Brain</tissue>
        <tissue>Brown adipose tissue</tissue>
        <tissue>Heart</tissue>
        <tissue>Kidney</tissue>
        <tissue>Liver</tissue>
        <tissue>Lung</tissue>
        <tissue>Pancreas</tissue>
        <tissue>Spleen</tissue>
        <tissue>Testis</tissue>
    </source>
</reference>
<comment type="function">
    <text evidence="1">Plays a role in the organization of endoplasmic reticulum exit sites. Specifically binds to phosphatidylinositol 3-phosphate (PI(3)P), phosphatidylinositol 4-phosphate (PI(4)P) and phosphatidylinositol 5-phosphate (PI(5)P).</text>
</comment>
<comment type="subunit">
    <text evidence="1">Interacts with SEC23A.</text>
</comment>
<comment type="subcellular location">
    <subcellularLocation>
        <location evidence="1">Cytoplasmic vesicle</location>
        <location evidence="1">COPII-coated vesicle membrane</location>
        <topology evidence="1">Peripheral membrane protein</topology>
        <orientation evidence="1">Cytoplasmic side</orientation>
    </subcellularLocation>
    <subcellularLocation>
        <location evidence="5">Endoplasmic reticulum</location>
    </subcellularLocation>
</comment>
<comment type="similarity">
    <text evidence="5">Belongs to the PA-PLA1 family.</text>
</comment>
<comment type="sequence caution" evidence="5">
    <conflict type="miscellaneous discrepancy">
        <sequence resource="EMBL-CDS" id="AAH66195"/>
    </conflict>
    <text>Contaminating sequence. Potential poly-A sequence.</text>
</comment>
<keyword id="KW-0968">Cytoplasmic vesicle</keyword>
<keyword id="KW-0256">Endoplasmic reticulum</keyword>
<keyword id="KW-0472">Membrane</keyword>
<keyword id="KW-0597">Phosphoprotein</keyword>
<keyword id="KW-1185">Reference proteome</keyword>
<dbReference type="EMBL" id="BY726433">
    <property type="status" value="NOT_ANNOTATED_CDS"/>
    <property type="molecule type" value="mRNA"/>
</dbReference>
<dbReference type="EMBL" id="AK042851">
    <property type="protein sequence ID" value="BAC31382.1"/>
    <property type="molecule type" value="mRNA"/>
</dbReference>
<dbReference type="EMBL" id="BC066195">
    <property type="protein sequence ID" value="AAH66195.1"/>
    <property type="status" value="ALT_SEQ"/>
    <property type="molecule type" value="mRNA"/>
</dbReference>
<dbReference type="CCDS" id="CCDS21900.1"/>
<dbReference type="SMR" id="Q6NZC7"/>
<dbReference type="FunCoup" id="Q6NZC7">
    <property type="interactions" value="4080"/>
</dbReference>
<dbReference type="IntAct" id="Q6NZC7">
    <property type="interactions" value="2"/>
</dbReference>
<dbReference type="STRING" id="10090.ENSMUSP00000035610"/>
<dbReference type="GlyGen" id="Q6NZC7">
    <property type="glycosylation" value="4 sites, 1 O-linked glycan (2 sites)"/>
</dbReference>
<dbReference type="iPTMnet" id="Q6NZC7"/>
<dbReference type="PhosphoSitePlus" id="Q6NZC7"/>
<dbReference type="jPOST" id="Q6NZC7"/>
<dbReference type="PaxDb" id="10090-ENSMUSP00000035610"/>
<dbReference type="PeptideAtlas" id="Q6NZC7"/>
<dbReference type="ProteomicsDB" id="260892"/>
<dbReference type="Pumba" id="Q6NZC7"/>
<dbReference type="AGR" id="MGI:2450915"/>
<dbReference type="MGI" id="MGI:2450915">
    <property type="gene designation" value="Sec23ip"/>
</dbReference>
<dbReference type="eggNOG" id="KOG2308">
    <property type="taxonomic scope" value="Eukaryota"/>
</dbReference>
<dbReference type="InParanoid" id="Q6NZC7"/>
<dbReference type="PhylomeDB" id="Q6NZC7"/>
<dbReference type="Reactome" id="R-MMU-204005">
    <property type="pathway name" value="COPII-mediated vesicle transport"/>
</dbReference>
<dbReference type="ChiTaRS" id="Sec23ip">
    <property type="organism name" value="mouse"/>
</dbReference>
<dbReference type="PRO" id="PR:Q6NZC7"/>
<dbReference type="Proteomes" id="UP000000589">
    <property type="component" value="Unplaced"/>
</dbReference>
<dbReference type="RNAct" id="Q6NZC7">
    <property type="molecule type" value="protein"/>
</dbReference>
<dbReference type="GO" id="GO:0005801">
    <property type="term" value="C:cis-Golgi network"/>
    <property type="evidence" value="ECO:0000314"/>
    <property type="project" value="MGI"/>
</dbReference>
<dbReference type="GO" id="GO:0070971">
    <property type="term" value="C:endoplasmic reticulum exit site"/>
    <property type="evidence" value="ECO:0000314"/>
    <property type="project" value="MGI"/>
</dbReference>
<dbReference type="GO" id="GO:0012507">
    <property type="term" value="C:ER to Golgi transport vesicle membrane"/>
    <property type="evidence" value="ECO:0007669"/>
    <property type="project" value="UniProtKB-SubCell"/>
</dbReference>
<dbReference type="GO" id="GO:0097038">
    <property type="term" value="C:perinuclear endoplasmic reticulum"/>
    <property type="evidence" value="ECO:0000314"/>
    <property type="project" value="MGI"/>
</dbReference>
<dbReference type="GO" id="GO:0048471">
    <property type="term" value="C:perinuclear region of cytoplasm"/>
    <property type="evidence" value="ECO:0000314"/>
    <property type="project" value="MGI"/>
</dbReference>
<dbReference type="GO" id="GO:0046872">
    <property type="term" value="F:metal ion binding"/>
    <property type="evidence" value="ECO:0007669"/>
    <property type="project" value="InterPro"/>
</dbReference>
<dbReference type="GO" id="GO:0001675">
    <property type="term" value="P:acrosome assembly"/>
    <property type="evidence" value="ECO:0000315"/>
    <property type="project" value="MGI"/>
</dbReference>
<dbReference type="GO" id="GO:0007338">
    <property type="term" value="P:single fertilization"/>
    <property type="evidence" value="ECO:0000315"/>
    <property type="project" value="MGI"/>
</dbReference>
<dbReference type="GO" id="GO:0007286">
    <property type="term" value="P:spermatid development"/>
    <property type="evidence" value="ECO:0000315"/>
    <property type="project" value="MGI"/>
</dbReference>
<dbReference type="FunFam" id="1.10.150.50:FF:000047">
    <property type="entry name" value="SEC23 interacting protein"/>
    <property type="match status" value="1"/>
</dbReference>
<dbReference type="Gene3D" id="1.10.150.50">
    <property type="entry name" value="Transcription Factor, Ets-1"/>
    <property type="match status" value="1"/>
</dbReference>
<dbReference type="InterPro" id="IPR004177">
    <property type="entry name" value="DDHD_dom"/>
</dbReference>
<dbReference type="InterPro" id="IPR001660">
    <property type="entry name" value="SAM"/>
</dbReference>
<dbReference type="InterPro" id="IPR013761">
    <property type="entry name" value="SAM/pointed_sf"/>
</dbReference>
<dbReference type="InterPro" id="IPR004170">
    <property type="entry name" value="WWE_dom"/>
</dbReference>
<dbReference type="PANTHER" id="PTHR23509">
    <property type="entry name" value="PA-PL1 PHOSPHOLIPASE FAMILY"/>
    <property type="match status" value="1"/>
</dbReference>
<dbReference type="PANTHER" id="PTHR23509:SF4">
    <property type="entry name" value="SEC23-INTERACTING PROTEIN"/>
    <property type="match status" value="1"/>
</dbReference>
<dbReference type="Pfam" id="PF02862">
    <property type="entry name" value="DDHD"/>
    <property type="match status" value="1"/>
</dbReference>
<dbReference type="Pfam" id="PF00536">
    <property type="entry name" value="SAM_1"/>
    <property type="match status" value="1"/>
</dbReference>
<dbReference type="Pfam" id="PF02825">
    <property type="entry name" value="WWE"/>
    <property type="match status" value="1"/>
</dbReference>
<dbReference type="Pfam" id="PF23464">
    <property type="entry name" value="WWE_3"/>
    <property type="match status" value="1"/>
</dbReference>
<dbReference type="SMART" id="SM01127">
    <property type="entry name" value="DDHD"/>
    <property type="match status" value="1"/>
</dbReference>
<dbReference type="SMART" id="SM00454">
    <property type="entry name" value="SAM"/>
    <property type="match status" value="1"/>
</dbReference>
<dbReference type="SUPFAM" id="SSF47769">
    <property type="entry name" value="SAM/Pointed domain"/>
    <property type="match status" value="1"/>
</dbReference>
<dbReference type="PROSITE" id="PS51043">
    <property type="entry name" value="DDHD"/>
    <property type="match status" value="1"/>
</dbReference>
<proteinExistence type="evidence at protein level"/>
<protein>
    <recommendedName>
        <fullName>SEC23-interacting protein</fullName>
    </recommendedName>
</protein>
<sequence>MADRKANGGGASASSSGTNLLFSSSATEFSFNVPFIPVTQAAASPASLLLPGEDSTDVGEEDSFLGQTSTHTSTPQTFSYFSQVSSSSDPFGNIGQSPLTTSAMSAGQSALPKPPATLAFTTGSQDALSAFPPSVSKAPGATPPSQMGTSTYSPSQPSSLPPNFGSPPQGIPQQGHNPYRHTPVSSRANPYITPPQLQQCQMPGHSSYPPPSGPPVQTYQMPPGPLPPLPTAMQSPAQQQVPARPAGPLVQGPSPFVLQNQYEPVQPHWFYCKEVEYKQLWMPFSVLDSLNLEEIYNSVQPDPESVVLGTDGGRYDVYLYDRMRKSVYWEEEPTEVRRCTWFYKGDTDSRFIPYTEEFSEKLEAEYKKAVSTNQWHRRLEFPSGETIVMHNPKVIVQFQPSSVPDEWGTTQDGQTRPRVVKRGIDDSLDEIPDGEMPQVDHLVFMVHGIGPVCDLRFRSIIECVDDFRVVSLKLLQTHFKKSVDEGKVSRVEFLPVHWHSALGGHATGVDRNIKKITLPSIGRFRHFTNETLLDVLFYNSPTYCQAIVEKVEVEINRLHSLFMSRNPNFKGKVSVAGHSLGSLILFDILSNQRDMCVSKSPGSVAVSNGVIKHSQFQEKLISEESKLMSDESCDLDVEDEEPLTLHGTLEALSLFDYISTFEKEKIDMESLLMCTVDDLKEMGIPLGPRKKIANFVKLKAAKLEQKKAAAEKKAALAALTKGQDESAPKTKEMASPSSESNESKRKLSVGAYVSSVRVDYESFEVGTGQVSVAYSSLDFEPEIFFALGSPIGMLLTIRGVARIDEKYRLPTCKGFFNIYHPLDPVAYRLEPMIAPDLDLKAVLVPHHKGRKRLHLELKESLSRMGSDLKQGFISSLKSAWQTLNEFARAHTSTTQLQEELEKVANQIKEEEEKQVVEAKKKKESPELSKDEDYLGKVGMLNGGRRIDYVLQEKPIESFNEYLFALQSHLCYWGSEDTALLLLKEIYRTMNISPEQPQH</sequence>
<evidence type="ECO:0000250" key="1"/>
<evidence type="ECO:0000250" key="2">
    <source>
        <dbReference type="UniProtKB" id="Q9Y6Y8"/>
    </source>
</evidence>
<evidence type="ECO:0000255" key="3">
    <source>
        <dbReference type="PROSITE-ProRule" id="PRU00378"/>
    </source>
</evidence>
<evidence type="ECO:0000256" key="4">
    <source>
        <dbReference type="SAM" id="MobiDB-lite"/>
    </source>
</evidence>
<evidence type="ECO:0000305" key="5"/>
<evidence type="ECO:0007744" key="6">
    <source>
    </source>
</evidence>